<gene>
    <name evidence="2" type="primary">psbD</name>
</gene>
<organism>
    <name type="scientific">Tupiella akineta</name>
    <name type="common">Green alga</name>
    <name type="synonym">Pseudendoclonium akinetum</name>
    <dbReference type="NCBI Taxonomy" id="160070"/>
    <lineage>
        <taxon>Eukaryota</taxon>
        <taxon>Viridiplantae</taxon>
        <taxon>Chlorophyta</taxon>
        <taxon>Ulvophyceae</taxon>
        <taxon>OUU clade</taxon>
        <taxon>Ulotrichales</taxon>
        <taxon>Tupiellaceae</taxon>
        <taxon>Tupiella</taxon>
    </lineage>
</organism>
<feature type="initiator methionine" description="Removed" evidence="1">
    <location>
        <position position="1"/>
    </location>
</feature>
<feature type="chain" id="PRO_0000359691" description="Photosystem II D2 protein">
    <location>
        <begin position="2"/>
        <end position="352"/>
    </location>
</feature>
<feature type="transmembrane region" description="Helical" evidence="2">
    <location>
        <begin position="40"/>
        <end position="60"/>
    </location>
</feature>
<feature type="transmembrane region" description="Helical" evidence="2">
    <location>
        <begin position="124"/>
        <end position="140"/>
    </location>
</feature>
<feature type="transmembrane region" description="Helical" evidence="2">
    <location>
        <begin position="152"/>
        <end position="165"/>
    </location>
</feature>
<feature type="transmembrane region" description="Helical" evidence="2">
    <location>
        <begin position="207"/>
        <end position="227"/>
    </location>
</feature>
<feature type="transmembrane region" description="Helical" evidence="2">
    <location>
        <begin position="278"/>
        <end position="294"/>
    </location>
</feature>
<feature type="binding site" description="axial binding residue" evidence="2">
    <location>
        <position position="117"/>
    </location>
    <ligand>
        <name>chlorophyll a</name>
        <dbReference type="ChEBI" id="CHEBI:58416"/>
        <label>ChlzD2</label>
    </ligand>
    <ligandPart>
        <name>Mg</name>
        <dbReference type="ChEBI" id="CHEBI:25107"/>
    </ligandPart>
</feature>
<feature type="binding site" evidence="2">
    <location>
        <position position="129"/>
    </location>
    <ligand>
        <name>pheophytin a</name>
        <dbReference type="ChEBI" id="CHEBI:136840"/>
        <label>D2</label>
    </ligand>
</feature>
<feature type="binding site" evidence="2">
    <location>
        <position position="142"/>
    </location>
    <ligand>
        <name>pheophytin a</name>
        <dbReference type="ChEBI" id="CHEBI:136840"/>
        <label>D2</label>
    </ligand>
</feature>
<feature type="binding site" description="axial binding residue" evidence="2">
    <location>
        <position position="197"/>
    </location>
    <ligand>
        <name>chlorophyll a</name>
        <dbReference type="ChEBI" id="CHEBI:58416"/>
        <label>PD2</label>
    </ligand>
    <ligandPart>
        <name>Mg</name>
        <dbReference type="ChEBI" id="CHEBI:25107"/>
    </ligandPart>
</feature>
<feature type="binding site" evidence="2">
    <location>
        <position position="214"/>
    </location>
    <ligand>
        <name>a plastoquinone</name>
        <dbReference type="ChEBI" id="CHEBI:17757"/>
        <label>Q(A)</label>
    </ligand>
</feature>
<feature type="binding site" evidence="2">
    <location>
        <position position="214"/>
    </location>
    <ligand>
        <name>Fe cation</name>
        <dbReference type="ChEBI" id="CHEBI:24875"/>
        <note>ligand shared with heterodimeric partner</note>
    </ligand>
</feature>
<feature type="binding site" evidence="2">
    <location>
        <position position="261"/>
    </location>
    <ligand>
        <name>a plastoquinone</name>
        <dbReference type="ChEBI" id="CHEBI:17757"/>
        <label>Q(A)</label>
    </ligand>
</feature>
<feature type="binding site" evidence="2">
    <location>
        <position position="268"/>
    </location>
    <ligand>
        <name>Fe cation</name>
        <dbReference type="ChEBI" id="CHEBI:24875"/>
        <note>ligand shared with heterodimeric partner</note>
    </ligand>
</feature>
<feature type="modified residue" description="N-acetylthreonine" evidence="1">
    <location>
        <position position="2"/>
    </location>
</feature>
<feature type="modified residue" description="Phosphothreonine" evidence="1">
    <location>
        <position position="2"/>
    </location>
</feature>
<comment type="function">
    <text evidence="2">Photosystem II (PSII) is a light-driven water:plastoquinone oxidoreductase that uses light energy to abstract electrons from H(2)O, generating O(2) and a proton gradient subsequently used for ATP formation. It consists of a core antenna complex that captures photons, and an electron transfer chain that converts photonic excitation into a charge separation. The D1/D2 (PsbA/PsbD) reaction center heterodimer binds P680, the primary electron donor of PSII as well as several subsequent electron acceptors. D2 is needed for assembly of a stable PSII complex.</text>
</comment>
<comment type="catalytic activity">
    <reaction evidence="2">
        <text>2 a plastoquinone + 4 hnu + 2 H2O = 2 a plastoquinol + O2</text>
        <dbReference type="Rhea" id="RHEA:36359"/>
        <dbReference type="Rhea" id="RHEA-COMP:9561"/>
        <dbReference type="Rhea" id="RHEA-COMP:9562"/>
        <dbReference type="ChEBI" id="CHEBI:15377"/>
        <dbReference type="ChEBI" id="CHEBI:15379"/>
        <dbReference type="ChEBI" id="CHEBI:17757"/>
        <dbReference type="ChEBI" id="CHEBI:30212"/>
        <dbReference type="ChEBI" id="CHEBI:62192"/>
        <dbReference type="EC" id="1.10.3.9"/>
    </reaction>
</comment>
<comment type="cofactor">
    <text evidence="2">The D1/D2 heterodimer binds P680, chlorophylls that are the primary electron donor of PSII, and subsequent electron acceptors. It shares a non-heme iron and each subunit binds pheophytin, quinone, additional chlorophylls, carotenoids and lipids. There is also a Cl(-1) ion associated with D1 and D2, which is required for oxygen evolution. The PSII complex binds additional chlorophylls, carotenoids and specific lipids.</text>
</comment>
<comment type="subunit">
    <text evidence="2">PSII is composed of 1 copy each of membrane proteins PsbA, PsbB, PsbC, PsbD, PsbE, PsbF, PsbH, PsbI, PsbJ, PsbK, PsbL, PsbM, PsbT, PsbX, PsbY, PsbZ, Psb30/Ycf12, at least 3 peripheral proteins of the oxygen-evolving complex and a large number of cofactors. It forms dimeric complexes.</text>
</comment>
<comment type="subcellular location">
    <subcellularLocation>
        <location evidence="2">Plastid</location>
        <location evidence="2">Chloroplast thylakoid membrane</location>
        <topology evidence="2">Multi-pass membrane protein</topology>
    </subcellularLocation>
</comment>
<comment type="miscellaneous">
    <text evidence="2">2 of the reaction center chlorophylls (ChlD1 and ChlD2) are entirely coordinated by water.</text>
</comment>
<comment type="similarity">
    <text evidence="2">Belongs to the reaction center PufL/M/PsbA/D family.</text>
</comment>
<geneLocation type="chloroplast"/>
<protein>
    <recommendedName>
        <fullName evidence="2">Photosystem II D2 protein</fullName>
        <shortName evidence="2">PSII D2 protein</shortName>
        <ecNumber evidence="2">1.10.3.9</ecNumber>
    </recommendedName>
    <alternativeName>
        <fullName evidence="2">Photosystem Q(A) protein</fullName>
    </alternativeName>
</protein>
<name>PSBD_TUPAK</name>
<evidence type="ECO:0000250" key="1">
    <source>
        <dbReference type="UniProtKB" id="P56761"/>
    </source>
</evidence>
<evidence type="ECO:0000255" key="2">
    <source>
        <dbReference type="HAMAP-Rule" id="MF_01383"/>
    </source>
</evidence>
<accession>Q3ZJ46</accession>
<proteinExistence type="inferred from homology"/>
<keyword id="KW-0007">Acetylation</keyword>
<keyword id="KW-0148">Chlorophyll</keyword>
<keyword id="KW-0150">Chloroplast</keyword>
<keyword id="KW-0157">Chromophore</keyword>
<keyword id="KW-0249">Electron transport</keyword>
<keyword id="KW-0408">Iron</keyword>
<keyword id="KW-0460">Magnesium</keyword>
<keyword id="KW-0472">Membrane</keyword>
<keyword id="KW-0479">Metal-binding</keyword>
<keyword id="KW-0560">Oxidoreductase</keyword>
<keyword id="KW-0597">Phosphoprotein</keyword>
<keyword id="KW-0602">Photosynthesis</keyword>
<keyword id="KW-0604">Photosystem II</keyword>
<keyword id="KW-0934">Plastid</keyword>
<keyword id="KW-0793">Thylakoid</keyword>
<keyword id="KW-0812">Transmembrane</keyword>
<keyword id="KW-1133">Transmembrane helix</keyword>
<keyword id="KW-0813">Transport</keyword>
<reference key="1">
    <citation type="journal article" date="2005" name="Mol. Biol. Evol.">
        <title>The chloroplast genome sequence of the green alga Pseudendoclonium akinetum (Ulvophyceae) reveals unusual structural features and new insights into the branching order of chlorophyte lineages.</title>
        <authorList>
            <person name="Pombert J.-F."/>
            <person name="Otis C."/>
            <person name="Lemieux C."/>
            <person name="Turmel M."/>
        </authorList>
    </citation>
    <scope>NUCLEOTIDE SEQUENCE [LARGE SCALE GENOMIC DNA]</scope>
    <source>
        <strain>UTEX 1912</strain>
    </source>
</reference>
<dbReference type="EC" id="1.10.3.9" evidence="2"/>
<dbReference type="EMBL" id="AY835431">
    <property type="protein sequence ID" value="AAV80701.1"/>
    <property type="molecule type" value="Genomic_DNA"/>
</dbReference>
<dbReference type="RefSeq" id="YP_636221.1">
    <property type="nucleotide sequence ID" value="NC_008114.1"/>
</dbReference>
<dbReference type="SMR" id="Q3ZJ46"/>
<dbReference type="GeneID" id="4108732"/>
<dbReference type="GO" id="GO:0009535">
    <property type="term" value="C:chloroplast thylakoid membrane"/>
    <property type="evidence" value="ECO:0007669"/>
    <property type="project" value="UniProtKB-SubCell"/>
</dbReference>
<dbReference type="GO" id="GO:0009523">
    <property type="term" value="C:photosystem II"/>
    <property type="evidence" value="ECO:0007669"/>
    <property type="project" value="UniProtKB-KW"/>
</dbReference>
<dbReference type="GO" id="GO:0016168">
    <property type="term" value="F:chlorophyll binding"/>
    <property type="evidence" value="ECO:0007669"/>
    <property type="project" value="UniProtKB-UniRule"/>
</dbReference>
<dbReference type="GO" id="GO:0045156">
    <property type="term" value="F:electron transporter, transferring electrons within the cyclic electron transport pathway of photosynthesis activity"/>
    <property type="evidence" value="ECO:0007669"/>
    <property type="project" value="InterPro"/>
</dbReference>
<dbReference type="GO" id="GO:0005506">
    <property type="term" value="F:iron ion binding"/>
    <property type="evidence" value="ECO:0007669"/>
    <property type="project" value="UniProtKB-UniRule"/>
</dbReference>
<dbReference type="GO" id="GO:0010242">
    <property type="term" value="F:oxygen evolving activity"/>
    <property type="evidence" value="ECO:0007669"/>
    <property type="project" value="UniProtKB-EC"/>
</dbReference>
<dbReference type="GO" id="GO:0009772">
    <property type="term" value="P:photosynthetic electron transport in photosystem II"/>
    <property type="evidence" value="ECO:0007669"/>
    <property type="project" value="InterPro"/>
</dbReference>
<dbReference type="CDD" id="cd09288">
    <property type="entry name" value="Photosystem-II_D2"/>
    <property type="match status" value="1"/>
</dbReference>
<dbReference type="FunFam" id="1.20.85.10:FF:000001">
    <property type="entry name" value="photosystem II D2 protein-like"/>
    <property type="match status" value="1"/>
</dbReference>
<dbReference type="Gene3D" id="1.20.85.10">
    <property type="entry name" value="Photosystem II protein D1-like"/>
    <property type="match status" value="1"/>
</dbReference>
<dbReference type="HAMAP" id="MF_01383">
    <property type="entry name" value="PSII_PsbD_D2"/>
    <property type="match status" value="1"/>
</dbReference>
<dbReference type="InterPro" id="IPR055266">
    <property type="entry name" value="D1/D2"/>
</dbReference>
<dbReference type="InterPro" id="IPR036854">
    <property type="entry name" value="Photo_II_D1/D2_sf"/>
</dbReference>
<dbReference type="InterPro" id="IPR000484">
    <property type="entry name" value="Photo_RC_L/M"/>
</dbReference>
<dbReference type="InterPro" id="IPR055265">
    <property type="entry name" value="Photo_RC_L/M_CS"/>
</dbReference>
<dbReference type="InterPro" id="IPR005868">
    <property type="entry name" value="PSII_PsbD/D2"/>
</dbReference>
<dbReference type="NCBIfam" id="TIGR01152">
    <property type="entry name" value="psbD"/>
    <property type="match status" value="1"/>
</dbReference>
<dbReference type="PANTHER" id="PTHR33149:SF12">
    <property type="entry name" value="PHOTOSYSTEM II D2 PROTEIN"/>
    <property type="match status" value="1"/>
</dbReference>
<dbReference type="PANTHER" id="PTHR33149">
    <property type="entry name" value="PHOTOSYSTEM II PROTEIN D1"/>
    <property type="match status" value="1"/>
</dbReference>
<dbReference type="Pfam" id="PF00124">
    <property type="entry name" value="Photo_RC"/>
    <property type="match status" value="1"/>
</dbReference>
<dbReference type="PRINTS" id="PR00256">
    <property type="entry name" value="REACTNCENTRE"/>
</dbReference>
<dbReference type="SUPFAM" id="SSF81483">
    <property type="entry name" value="Bacterial photosystem II reaction centre, L and M subunits"/>
    <property type="match status" value="1"/>
</dbReference>
<dbReference type="PROSITE" id="PS00244">
    <property type="entry name" value="REACTION_CENTER"/>
    <property type="match status" value="1"/>
</dbReference>
<sequence length="352" mass="39346">MTIAIGKSEQKRGLFDVADDWLRRDRFVFVGWSGLLLLPCAYFALGGWLTGTTFVTSWYTHGLASSYLEGCNFLTAAVSTPPNCMGHSLLLLWGPEAQSDFTRWCQLGGLWTFVALHGSFGLIGFMLRQFEIARAVKIRPYNAIAFSGPIAVFVSVFLIYPLGQAGWFFAPSFGVAAIFRFILFFQGFHNWTLNPFHMMGVAGILGAALLCAIHGATVENTLFEDGDGANTFRAFNPTQAEETYSMVTANRFWSQIFGVAFSNKRWLHFFMLFVPVTGLWMSALGVVGLALNLRAYDFVSQEIRAAEDPEFETFYTKNNLLNEGIRAWMAAQDQPHERLVFPEEVLPRGNAL</sequence>